<keyword id="KW-0249">Electron transport</keyword>
<keyword id="KW-0472">Membrane</keyword>
<keyword id="KW-0602">Photosynthesis</keyword>
<keyword id="KW-0934">Plastid</keyword>
<keyword id="KW-0793">Thylakoid</keyword>
<keyword id="KW-0812">Transmembrane</keyword>
<keyword id="KW-1133">Transmembrane helix</keyword>
<keyword id="KW-0813">Transport</keyword>
<name>PETL_CUSGR</name>
<dbReference type="EMBL" id="AM711639">
    <property type="protein sequence ID" value="CAM98343.1"/>
    <property type="molecule type" value="Genomic_DNA"/>
</dbReference>
<dbReference type="RefSeq" id="YP_001430057.1">
    <property type="nucleotide sequence ID" value="NC_009765.1"/>
</dbReference>
<dbReference type="SMR" id="A7M915"/>
<dbReference type="GeneID" id="5536719"/>
<dbReference type="GO" id="GO:0009512">
    <property type="term" value="C:cytochrome b6f complex"/>
    <property type="evidence" value="ECO:0007669"/>
    <property type="project" value="InterPro"/>
</dbReference>
<dbReference type="GO" id="GO:0055035">
    <property type="term" value="C:plastid thylakoid membrane"/>
    <property type="evidence" value="ECO:0007669"/>
    <property type="project" value="UniProtKB-SubCell"/>
</dbReference>
<dbReference type="GO" id="GO:0045158">
    <property type="term" value="F:electron transporter, transferring electrons within cytochrome b6/f complex of photosystem II activity"/>
    <property type="evidence" value="ECO:0007669"/>
    <property type="project" value="UniProtKB-UniRule"/>
</dbReference>
<dbReference type="GO" id="GO:0015979">
    <property type="term" value="P:photosynthesis"/>
    <property type="evidence" value="ECO:0007669"/>
    <property type="project" value="UniProtKB-KW"/>
</dbReference>
<dbReference type="HAMAP" id="MF_00433">
    <property type="entry name" value="Cytb6_f_PetL"/>
    <property type="match status" value="1"/>
</dbReference>
<dbReference type="InterPro" id="IPR007802">
    <property type="entry name" value="Cyt_b6/f_cplx_su6"/>
</dbReference>
<dbReference type="PANTHER" id="PTHR37266">
    <property type="entry name" value="CYTOCHROME B6-F COMPLEX SUBUNIT 6"/>
    <property type="match status" value="1"/>
</dbReference>
<dbReference type="PANTHER" id="PTHR37266:SF1">
    <property type="entry name" value="CYTOCHROME B6-F COMPLEX SUBUNIT 6"/>
    <property type="match status" value="1"/>
</dbReference>
<dbReference type="Pfam" id="PF05115">
    <property type="entry name" value="PetL"/>
    <property type="match status" value="1"/>
</dbReference>
<dbReference type="SUPFAM" id="SSF103436">
    <property type="entry name" value="PetL subunit of the cytochrome b6f complex"/>
    <property type="match status" value="1"/>
</dbReference>
<proteinExistence type="evidence at transcript level"/>
<feature type="chain" id="PRO_0000308468" description="Cytochrome b6-f complex subunit 6">
    <location>
        <begin position="1"/>
        <end position="31"/>
    </location>
</feature>
<feature type="transmembrane region" description="Helical" evidence="2">
    <location>
        <begin position="4"/>
        <end position="24"/>
    </location>
</feature>
<comment type="function">
    <text evidence="1">Component of the cytochrome b6-f complex, which mediates electron transfer between photosystem II (PSII) and photosystem I (PSI), cyclic electron flow around PSI, and state transitions. PetL is important for photoautotrophic growth as well as for electron transfer efficiency and stability of the cytochrome b6-f complex (By similarity).</text>
</comment>
<comment type="subunit">
    <text evidence="1">The 4 large subunits of the cytochrome b6-f complex are cytochrome b6, subunit IV (17 kDa polypeptide, PetD), cytochrome f and the Rieske protein, while the 4 small subunits are PetG, PetL, PetM and PetN. The complex functions as a dimer (By similarity).</text>
</comment>
<comment type="subcellular location">
    <subcellularLocation>
        <location evidence="3">Plastid thylakoid membrane</location>
        <topology evidence="3">Single-pass membrane protein</topology>
    </subcellularLocation>
</comment>
<comment type="similarity">
    <text evidence="3">Belongs to the PetL family.</text>
</comment>
<comment type="caution">
    <text evidence="3">Young tissue from this organism is photosynthetic and contains some thylakoids, although the photosynthetic activity does not exceed the light compensation point.</text>
</comment>
<reference key="1">
    <citation type="journal article" date="2007" name="BMC Plant Biol.">
        <title>Complete DNA sequences of the plastid genomes of two parasitic flowering plant species, Cuscuta reflexa and Cuscuta gronovii.</title>
        <authorList>
            <person name="Funk H.T."/>
            <person name="Berg S."/>
            <person name="Krupinska K."/>
            <person name="Maier U.-G."/>
            <person name="Krause K."/>
        </authorList>
    </citation>
    <scope>NUCLEOTIDE SEQUENCE [LARGE SCALE GENOMIC DNA]</scope>
    <scope>ABSENCE OF RNA EDITING</scope>
</reference>
<geneLocation type="plastid"/>
<sequence>MPTITSYFCLLLAALTLTLALFIGLSKRQLI</sequence>
<gene>
    <name type="primary">petL</name>
</gene>
<accession>A7M915</accession>
<protein>
    <recommendedName>
        <fullName>Cytochrome b6-f complex subunit 6</fullName>
    </recommendedName>
    <alternativeName>
        <fullName>Cytochrome b6-f complex subunit PetL</fullName>
    </alternativeName>
    <alternativeName>
        <fullName>Cytochrome b6-f complex subunit VI</fullName>
    </alternativeName>
</protein>
<evidence type="ECO:0000250" key="1"/>
<evidence type="ECO:0000255" key="2"/>
<evidence type="ECO:0000305" key="3"/>
<organism>
    <name type="scientific">Cuscuta gronovii</name>
    <name type="common">Common dodder</name>
    <name type="synonym">Epithymum gronovii</name>
    <dbReference type="NCBI Taxonomy" id="35886"/>
    <lineage>
        <taxon>Eukaryota</taxon>
        <taxon>Viridiplantae</taxon>
        <taxon>Streptophyta</taxon>
        <taxon>Embryophyta</taxon>
        <taxon>Tracheophyta</taxon>
        <taxon>Spermatophyta</taxon>
        <taxon>Magnoliopsida</taxon>
        <taxon>eudicotyledons</taxon>
        <taxon>Gunneridae</taxon>
        <taxon>Pentapetalae</taxon>
        <taxon>asterids</taxon>
        <taxon>lamiids</taxon>
        <taxon>Solanales</taxon>
        <taxon>Convolvulaceae</taxon>
        <taxon>Cuscuteae</taxon>
        <taxon>Cuscuta</taxon>
        <taxon>Cuscuta subgen. Grammica</taxon>
        <taxon>Cuscuta sect. Oxycarpae</taxon>
    </lineage>
</organism>